<dbReference type="EMBL" id="AB281186">
    <property type="protein sequence ID" value="BAF44194.1"/>
    <property type="molecule type" value="Genomic_DNA"/>
</dbReference>
<dbReference type="EMBL" id="CP000100">
    <property type="protein sequence ID" value="ABB57921.1"/>
    <property type="molecule type" value="Genomic_DNA"/>
</dbReference>
<dbReference type="RefSeq" id="WP_011244514.1">
    <property type="nucleotide sequence ID" value="NZ_JACJTX010000001.1"/>
</dbReference>
<dbReference type="SMR" id="Q31LZ8"/>
<dbReference type="STRING" id="1140.Synpcc7942_1891"/>
<dbReference type="PaxDb" id="1140-Synpcc7942_1891"/>
<dbReference type="PRIDE" id="Q31LZ8"/>
<dbReference type="KEGG" id="syf:Synpcc7942_1891"/>
<dbReference type="eggNOG" id="COG1432">
    <property type="taxonomic scope" value="Bacteria"/>
</dbReference>
<dbReference type="HOGENOM" id="CLU_092340_2_0_3"/>
<dbReference type="OrthoDB" id="9794137at2"/>
<dbReference type="BioCyc" id="SYNEL:SYNPCC7942_1891-MONOMER"/>
<dbReference type="Proteomes" id="UP000889800">
    <property type="component" value="Chromosome"/>
</dbReference>
<dbReference type="GO" id="GO:0004540">
    <property type="term" value="F:RNA nuclease activity"/>
    <property type="evidence" value="ECO:0007669"/>
    <property type="project" value="InterPro"/>
</dbReference>
<dbReference type="GO" id="GO:0007623">
    <property type="term" value="P:circadian rhythm"/>
    <property type="evidence" value="ECO:0000315"/>
    <property type="project" value="UniProtKB"/>
</dbReference>
<dbReference type="CDD" id="cd10911">
    <property type="entry name" value="PIN_LabA"/>
    <property type="match status" value="1"/>
</dbReference>
<dbReference type="Gene3D" id="3.40.50.1010">
    <property type="entry name" value="5'-nuclease"/>
    <property type="match status" value="1"/>
</dbReference>
<dbReference type="InterPro" id="IPR047140">
    <property type="entry name" value="LabA"/>
</dbReference>
<dbReference type="InterPro" id="IPR021139">
    <property type="entry name" value="NYN"/>
</dbReference>
<dbReference type="PANTHER" id="PTHR35458">
    <property type="entry name" value="SLR0755 PROTEIN"/>
    <property type="match status" value="1"/>
</dbReference>
<dbReference type="PANTHER" id="PTHR35458:SF2">
    <property type="entry name" value="SLR0755 PROTEIN"/>
    <property type="match status" value="1"/>
</dbReference>
<dbReference type="Pfam" id="PF01936">
    <property type="entry name" value="NYN"/>
    <property type="match status" value="1"/>
</dbReference>
<accession>Q31LZ8</accession>
<feature type="chain" id="PRO_0000457282" description="Low amplitude and bright protein LabA">
    <location>
        <begin position="1"/>
        <end position="186"/>
    </location>
</feature>
<sequence length="186" mass="21733">MAFRPSRLAIFIDGNNMFYAQQKNGWFFDPRRVLNYFANRPEIELVNAYWYTGLKDPQDQRGFRDALVSLGYTVRTKMLKEFHDESNGNRYFQRANLDIEIVIDMFNTVEQYDEIVLFSGDGDFERAIELLRAKQTHITVVSTDGMIARELRNATDRYIDLNDIRSFIEKTERPEPFVSAPVIAPA</sequence>
<organism>
    <name type="scientific">Synechococcus elongatus (strain ATCC 33912 / PCC 7942 / FACHB-805)</name>
    <name type="common">Anacystis nidulans R2</name>
    <dbReference type="NCBI Taxonomy" id="1140"/>
    <lineage>
        <taxon>Bacteria</taxon>
        <taxon>Bacillati</taxon>
        <taxon>Cyanobacteriota</taxon>
        <taxon>Cyanophyceae</taxon>
        <taxon>Synechococcales</taxon>
        <taxon>Synechococcaceae</taxon>
        <taxon>Synechococcus</taxon>
    </lineage>
</organism>
<comment type="function">
    <text evidence="1 2">Functions in an output pathway of the circadian clock. One of three clock output pathways. Involved in negative feedback regulation of KaiC; deletion leads to overexpression of KaiC protein and decreases the amplitude of the circadian response (PubMed:17210789, PubMed:20133618). Overexpression reduces the expression of circadian genes (PubMed:17210789).</text>
</comment>
<comment type="induction">
    <text evidence="1">Transcripts rise slowly in low continuous light with little rhythmicity.</text>
</comment>
<comment type="disruption phenotype">
    <text evidence="1 2">Cells grow slowly on solid but not liquid medium, excess KaiC expression no longer autorepresses, decreases the amplitude of circadian rhythms. Partially restores sasA deletion phenotypes suggesting they are not in the same output pathway, does not restore rpaA deletion, suggesting rpaA is downstream of labA in the same output pathway (PubMed:17210789). In double labA-cikA deletions KaiC levels are much higher than either deletion alone, but the phosphorylation ratios are nearly wild-type (PubMed:20133618).</text>
</comment>
<name>LABA_SYNE7</name>
<keyword id="KW-0090">Biological rhythms</keyword>
<keyword id="KW-1185">Reference proteome</keyword>
<protein>
    <recommendedName>
        <fullName evidence="3">Low amplitude and bright protein LabA</fullName>
    </recommendedName>
</protein>
<reference evidence="5" key="1">
    <citation type="journal article" date="2007" name="Genes Dev.">
        <title>labA: a novel gene required for negative feedback regulation of the cyanobacterial circadian clock protein KaiC.</title>
        <authorList>
            <person name="Taniguchi Y."/>
            <person name="Katayama M."/>
            <person name="Ito R."/>
            <person name="Takai N."/>
            <person name="Kondo T."/>
            <person name="Oyama T."/>
        </authorList>
    </citation>
    <scope>NUCLEOTIDE SEQUENCE [GENOMIC DNA]</scope>
    <scope>FUNCTION</scope>
    <scope>INDUCTION</scope>
    <scope>DISRUPTION PHENOTYPE</scope>
    <source>
        <strain>ATCC 33912 / PCC 7942 / FACHB-805</strain>
    </source>
</reference>
<reference evidence="4" key="2">
    <citation type="submission" date="2005-08" db="EMBL/GenBank/DDBJ databases">
        <title>Complete sequence of chromosome 1 of Synechococcus elongatus PCC 7942.</title>
        <authorList>
            <consortium name="US DOE Joint Genome Institute"/>
            <person name="Copeland A."/>
            <person name="Lucas S."/>
            <person name="Lapidus A."/>
            <person name="Barry K."/>
            <person name="Detter J.C."/>
            <person name="Glavina T."/>
            <person name="Hammon N."/>
            <person name="Israni S."/>
            <person name="Pitluck S."/>
            <person name="Schmutz J."/>
            <person name="Larimer F."/>
            <person name="Land M."/>
            <person name="Kyrpides N."/>
            <person name="Lykidis A."/>
            <person name="Golden S."/>
            <person name="Richardson P."/>
        </authorList>
    </citation>
    <scope>NUCLEOTIDE SEQUENCE [LARGE SCALE GENOMIC DNA]</scope>
    <source>
        <strain>ATCC 33912 / PCC 7942 / FACHB-805</strain>
    </source>
</reference>
<reference key="3">
    <citation type="journal article" date="2010" name="Proc. Natl. Acad. Sci. U.S.A.">
        <title>Three major output pathways from the KaiABC-based oscillator cooperate to generate robust circadian kaiBC expression in cyanobacteria.</title>
        <authorList>
            <person name="Taniguchi Y."/>
            <person name="Takai N."/>
            <person name="Katayama M."/>
            <person name="Kondo T."/>
            <person name="Oyama T."/>
        </authorList>
    </citation>
    <scope>FUNCTION IN OUTPUT PATHWAY</scope>
    <scope>DISRUPTION PHENOTYPE</scope>
    <source>
        <strain>ATCC 33912 / PCC 7942 / FACHB-805</strain>
    </source>
</reference>
<evidence type="ECO:0000269" key="1">
    <source>
    </source>
</evidence>
<evidence type="ECO:0000269" key="2">
    <source>
    </source>
</evidence>
<evidence type="ECO:0000303" key="3">
    <source>
    </source>
</evidence>
<evidence type="ECO:0000312" key="4">
    <source>
        <dbReference type="EMBL" id="ABB57921.1"/>
    </source>
</evidence>
<evidence type="ECO:0000312" key="5">
    <source>
        <dbReference type="EMBL" id="BAF44194.1"/>
    </source>
</evidence>
<gene>
    <name evidence="3" type="primary">labA</name>
    <name evidence="4" type="ordered locus">Synpcc7942_1891</name>
</gene>
<proteinExistence type="evidence at protein level"/>